<dbReference type="EMBL" id="AJ400848">
    <property type="protein sequence ID" value="CAB88709.1"/>
    <property type="molecule type" value="Genomic_DNA"/>
</dbReference>
<dbReference type="PIR" id="S02002">
    <property type="entry name" value="S02002"/>
</dbReference>
<dbReference type="RefSeq" id="NP_054916.1">
    <property type="nucleotide sequence ID" value="NC_002202.1"/>
</dbReference>
<dbReference type="PDB" id="3JCU">
    <property type="method" value="EM"/>
    <property type="resolution" value="3.20 A"/>
    <property type="chains" value="I/i=1-36"/>
</dbReference>
<dbReference type="PDB" id="8Z9D">
    <property type="method" value="EM"/>
    <property type="resolution" value="3.22 A"/>
    <property type="chains" value="I/II/Ii/i=1-36"/>
</dbReference>
<dbReference type="PDBsum" id="3JCU"/>
<dbReference type="PDBsum" id="8Z9D"/>
<dbReference type="EMDB" id="EMD-39860"/>
<dbReference type="SMR" id="P62103"/>
<dbReference type="DIP" id="DIP-62015N"/>
<dbReference type="FunCoup" id="P62103">
    <property type="interactions" value="50"/>
</dbReference>
<dbReference type="IntAct" id="P62103">
    <property type="interactions" value="1"/>
</dbReference>
<dbReference type="STRING" id="3562.P62103"/>
<dbReference type="GeneID" id="2715614"/>
<dbReference type="KEGG" id="soe:2715614"/>
<dbReference type="InParanoid" id="P62103"/>
<dbReference type="OrthoDB" id="564007at2759"/>
<dbReference type="Proteomes" id="UP001155700">
    <property type="component" value="Chloroplast Pltd"/>
</dbReference>
<dbReference type="GO" id="GO:0009535">
    <property type="term" value="C:chloroplast thylakoid membrane"/>
    <property type="evidence" value="ECO:0007669"/>
    <property type="project" value="UniProtKB-SubCell"/>
</dbReference>
<dbReference type="GO" id="GO:0009539">
    <property type="term" value="C:photosystem II reaction center"/>
    <property type="evidence" value="ECO:0007669"/>
    <property type="project" value="InterPro"/>
</dbReference>
<dbReference type="GO" id="GO:0015979">
    <property type="term" value="P:photosynthesis"/>
    <property type="evidence" value="ECO:0007669"/>
    <property type="project" value="UniProtKB-UniRule"/>
</dbReference>
<dbReference type="HAMAP" id="MF_01316">
    <property type="entry name" value="PSII_PsbI"/>
    <property type="match status" value="1"/>
</dbReference>
<dbReference type="InterPro" id="IPR003686">
    <property type="entry name" value="PSII_PsbI"/>
</dbReference>
<dbReference type="InterPro" id="IPR037271">
    <property type="entry name" value="PSII_PsbI_sf"/>
</dbReference>
<dbReference type="NCBIfam" id="NF002735">
    <property type="entry name" value="PRK02655.1"/>
    <property type="match status" value="1"/>
</dbReference>
<dbReference type="PANTHER" id="PTHR35772">
    <property type="entry name" value="PHOTOSYSTEM II REACTION CENTER PROTEIN I"/>
    <property type="match status" value="1"/>
</dbReference>
<dbReference type="PANTHER" id="PTHR35772:SF1">
    <property type="entry name" value="PHOTOSYSTEM II REACTION CENTER PROTEIN I"/>
    <property type="match status" value="1"/>
</dbReference>
<dbReference type="Pfam" id="PF02532">
    <property type="entry name" value="PsbI"/>
    <property type="match status" value="1"/>
</dbReference>
<dbReference type="SUPFAM" id="SSF161041">
    <property type="entry name" value="Photosystem II reaction center protein I, PsbI"/>
    <property type="match status" value="1"/>
</dbReference>
<geneLocation type="chloroplast"/>
<name>PSBI_SPIOL</name>
<reference key="1">
    <citation type="journal article" date="2001" name="Plant Mol. Biol.">
        <title>The plastid chromosome of spinach (Spinacia oleracea): complete nucleotide sequence and gene organization.</title>
        <authorList>
            <person name="Schmitz-Linneweber C."/>
            <person name="Maier R.M."/>
            <person name="Alcaraz J.-P."/>
            <person name="Cottet A."/>
            <person name="Herrmann R.G."/>
            <person name="Mache R."/>
        </authorList>
    </citation>
    <scope>NUCLEOTIDE SEQUENCE [LARGE SCALE GENOMIC DNA]</scope>
    <source>
        <strain>cv. Geant d'hiver</strain>
        <strain>cv. Monatol</strain>
    </source>
</reference>
<reference key="2">
    <citation type="journal article" date="1988" name="FEBS Lett.">
        <title>A new photosystem II reaction center component (4.8 kDa protein) encoded by chloroplast genome.</title>
        <authorList>
            <person name="Ikeuchi M."/>
            <person name="Inoue Y."/>
        </authorList>
    </citation>
    <scope>PROTEIN SEQUENCE OF 1-20</scope>
    <scope>SUBUNIT</scope>
    <scope>SUBCELLULAR LOCATION</scope>
</reference>
<reference key="3">
    <citation type="journal article" date="1989" name="FEBS Lett.">
        <title>N-terminal sequencing of photosystem II low-molecular-mass proteins. 5 and 4.1 kDa components of the O2-evolving core complex from higher plants.</title>
        <authorList>
            <person name="Ikeuchi M."/>
            <person name="Takio K."/>
            <person name="Inoue Y."/>
        </authorList>
    </citation>
    <scope>PROTEIN SEQUENCE OF 1-20</scope>
    <scope>SUBUNIT</scope>
    <scope>SUBCELLULAR LOCATION</scope>
</reference>
<reference key="4">
    <citation type="journal article" date="1998" name="J. Biol. Chem.">
        <title>Isolation and characterization of monomeric and dimeric CP47-reaction center photosystem II complexes.</title>
        <authorList>
            <person name="Zheleva D."/>
            <person name="Sharma J."/>
            <person name="Panico M."/>
            <person name="Morris H.R."/>
            <person name="Barber J."/>
        </authorList>
    </citation>
    <scope>PROTEIN SEQUENCE OF 1-5</scope>
    <scope>SUBUNIT</scope>
    <scope>SUBCELLULAR LOCATION</scope>
    <scope>FORMYLATION AT MET-1</scope>
    <scope>MASS SPECTROMETRY</scope>
</reference>
<proteinExistence type="evidence at protein level"/>
<comment type="function">
    <text evidence="1">One of the components of the core complex of photosystem II (PSII), required for its stability and/or assembly. PSII is a light-driven water:plastoquinone oxidoreductase that uses light energy to abstract electrons from H(2)O, generating O(2) and a proton gradient subsequently used for ATP formation. It consists of a core antenna complex that captures photons, and an electron transfer chain that converts photonic excitation into a charge separation.</text>
</comment>
<comment type="subunit">
    <text evidence="1 2 3 4">PSII is composed of 1 copy each of membrane proteins PsbA, PsbB, PsbC, PsbD, PsbE, PsbF, PsbH, PsbI, PsbJ, PsbK, PsbL, PsbM, PsbT, PsbX, PsbY, PsbZ, Psb30/Ycf12, at least 3 peripheral proteins of the oxygen-evolving complex and a large number of cofactors. It forms dimeric complexes.</text>
</comment>
<comment type="subcellular location">
    <subcellularLocation>
        <location evidence="1 2 3 4">Plastid</location>
        <location evidence="1 2 3 4">Chloroplast thylakoid membrane</location>
        <topology evidence="1 6 7 8">Single-pass membrane protein</topology>
    </subcellularLocation>
</comment>
<comment type="mass spectrometry" mass="4195.5" method="MALDI" evidence="4"/>
<comment type="similarity">
    <text evidence="1">Belongs to the PsbI family.</text>
</comment>
<evidence type="ECO:0000255" key="1">
    <source>
        <dbReference type="HAMAP-Rule" id="MF_01316"/>
    </source>
</evidence>
<evidence type="ECO:0000269" key="2">
    <source>
    </source>
</evidence>
<evidence type="ECO:0000269" key="3">
    <source>
    </source>
</evidence>
<evidence type="ECO:0000269" key="4">
    <source>
    </source>
</evidence>
<evidence type="ECO:0000303" key="5">
    <source>
    </source>
</evidence>
<evidence type="ECO:0000305" key="6">
    <source>
    </source>
</evidence>
<evidence type="ECO:0000305" key="7">
    <source>
    </source>
</evidence>
<evidence type="ECO:0000305" key="8">
    <source>
    </source>
</evidence>
<evidence type="ECO:0007829" key="9">
    <source>
        <dbReference type="PDB" id="3JCU"/>
    </source>
</evidence>
<gene>
    <name evidence="1" type="primary">psbI</name>
</gene>
<protein>
    <recommendedName>
        <fullName evidence="1">Photosystem II reaction center protein I</fullName>
        <shortName evidence="1">PSII-I</shortName>
    </recommendedName>
    <alternativeName>
        <fullName evidence="1 5">PSII 4.8 kDa protein</fullName>
    </alternativeName>
</protein>
<sequence length="36" mass="4168">MLTLKLFVYTVVIFFVSLFIFGFLSNDPGRNPGREE</sequence>
<feature type="chain" id="PRO_0000219656" description="Photosystem II reaction center protein I">
    <location>
        <begin position="1"/>
        <end position="36"/>
    </location>
</feature>
<feature type="transmembrane region" description="Helical" evidence="1">
    <location>
        <begin position="4"/>
        <end position="24"/>
    </location>
</feature>
<feature type="modified residue" description="N-formylmethionine" evidence="4">
    <location>
        <position position="1"/>
    </location>
</feature>
<feature type="helix" evidence="9">
    <location>
        <begin position="2"/>
        <end position="24"/>
    </location>
</feature>
<feature type="helix" evidence="9">
    <location>
        <begin position="27"/>
        <end position="29"/>
    </location>
</feature>
<organism>
    <name type="scientific">Spinacia oleracea</name>
    <name type="common">Spinach</name>
    <dbReference type="NCBI Taxonomy" id="3562"/>
    <lineage>
        <taxon>Eukaryota</taxon>
        <taxon>Viridiplantae</taxon>
        <taxon>Streptophyta</taxon>
        <taxon>Embryophyta</taxon>
        <taxon>Tracheophyta</taxon>
        <taxon>Spermatophyta</taxon>
        <taxon>Magnoliopsida</taxon>
        <taxon>eudicotyledons</taxon>
        <taxon>Gunneridae</taxon>
        <taxon>Pentapetalae</taxon>
        <taxon>Caryophyllales</taxon>
        <taxon>Chenopodiaceae</taxon>
        <taxon>Chenopodioideae</taxon>
        <taxon>Anserineae</taxon>
        <taxon>Spinacia</taxon>
    </lineage>
</organism>
<keyword id="KW-0002">3D-structure</keyword>
<keyword id="KW-0150">Chloroplast</keyword>
<keyword id="KW-0903">Direct protein sequencing</keyword>
<keyword id="KW-0291">Formylation</keyword>
<keyword id="KW-0472">Membrane</keyword>
<keyword id="KW-0602">Photosynthesis</keyword>
<keyword id="KW-0604">Photosystem II</keyword>
<keyword id="KW-0934">Plastid</keyword>
<keyword id="KW-0674">Reaction center</keyword>
<keyword id="KW-1185">Reference proteome</keyword>
<keyword id="KW-0793">Thylakoid</keyword>
<keyword id="KW-0812">Transmembrane</keyword>
<keyword id="KW-1133">Transmembrane helix</keyword>
<accession>P62103</accession>
<accession>P09970</accession>